<protein>
    <recommendedName>
        <fullName evidence="4">Purine permease 21</fullName>
        <shortName evidence="4">AtPUP21</shortName>
    </recommendedName>
</protein>
<accession>O49726</accession>
<gene>
    <name evidence="4" type="primary">PUP21</name>
    <name evidence="6" type="ordered locus">At4g18220</name>
    <name evidence="7" type="ORF">T9A21.70</name>
</gene>
<comment type="subcellular location">
    <subcellularLocation>
        <location evidence="5">Membrane</location>
        <topology evidence="5">Multi-pass membrane protein</topology>
    </subcellularLocation>
</comment>
<comment type="tissue specificity">
    <text evidence="3">Expressed in mesophyll cells.</text>
</comment>
<comment type="similarity">
    <text evidence="5">Belongs to the purine permeases (TC 2.A.7.14) family.</text>
</comment>
<comment type="sequence caution" evidence="5">
    <conflict type="erroneous gene model prediction">
        <sequence resource="EMBL-CDS" id="CAA16794"/>
    </conflict>
</comment>
<comment type="sequence caution" evidence="5">
    <conflict type="erroneous gene model prediction">
        <sequence resource="EMBL-CDS" id="CAB78824"/>
    </conflict>
</comment>
<organism>
    <name type="scientific">Arabidopsis thaliana</name>
    <name type="common">Mouse-ear cress</name>
    <dbReference type="NCBI Taxonomy" id="3702"/>
    <lineage>
        <taxon>Eukaryota</taxon>
        <taxon>Viridiplantae</taxon>
        <taxon>Streptophyta</taxon>
        <taxon>Embryophyta</taxon>
        <taxon>Tracheophyta</taxon>
        <taxon>Spermatophyta</taxon>
        <taxon>Magnoliopsida</taxon>
        <taxon>eudicotyledons</taxon>
        <taxon>Gunneridae</taxon>
        <taxon>Pentapetalae</taxon>
        <taxon>rosids</taxon>
        <taxon>malvids</taxon>
        <taxon>Brassicales</taxon>
        <taxon>Brassicaceae</taxon>
        <taxon>Camelineae</taxon>
        <taxon>Arabidopsis</taxon>
    </lineage>
</organism>
<sequence>MKGDQEVQVIVQQGKEPIPTDQDERSSVSGSQTKLSHSNTYKRWLRVAIYTFFVISGQSVATILGRLYYENGGNSKWLATVVQLVGFPILLPYHLLSVKTHTTTQRDGKLTSLRNRALVYIVLGLLVGAACYLYSIGLLYLPVSTLSLICASQLAFTAFFSYLLNSQKLTPIILNSLFLLTISSTLLAFNNEESDSKKVTKGEYVKGFVCTVGASAGFGLLLSLQQLAFRKVLKKQTFSEVINMIIYMSLVASCVSVVGLFASSEWKTLSSEMENYKLGKVSYVMNLVWTAVTWQVFSIGCTGLIFELSSLFSNAISALGLPVVPILAVIIFHDKMNGLKVISMILAIWGFVSYVYQQYLDETNLKKSNEIPTTESPDRPEAEGSSEQSK</sequence>
<feature type="chain" id="PRO_0000317396" description="Purine permease 21">
    <location>
        <begin position="1"/>
        <end position="390"/>
    </location>
</feature>
<feature type="transmembrane region" description="Helical" evidence="1">
    <location>
        <begin position="44"/>
        <end position="64"/>
    </location>
</feature>
<feature type="transmembrane region" description="Helical" evidence="1">
    <location>
        <begin position="78"/>
        <end position="98"/>
    </location>
</feature>
<feature type="transmembrane region" description="Helical" evidence="1">
    <location>
        <begin position="118"/>
        <end position="138"/>
    </location>
</feature>
<feature type="transmembrane region" description="Helical" evidence="1">
    <location>
        <begin position="140"/>
        <end position="160"/>
    </location>
</feature>
<feature type="transmembrane region" description="Helical" evidence="1">
    <location>
        <begin position="169"/>
        <end position="189"/>
    </location>
</feature>
<feature type="transmembrane region" description="Helical" evidence="1">
    <location>
        <begin position="204"/>
        <end position="224"/>
    </location>
</feature>
<feature type="transmembrane region" description="Helical" evidence="1">
    <location>
        <begin position="241"/>
        <end position="261"/>
    </location>
</feature>
<feature type="transmembrane region" description="Helical" evidence="1">
    <location>
        <begin position="287"/>
        <end position="307"/>
    </location>
</feature>
<feature type="transmembrane region" description="Helical" evidence="1">
    <location>
        <begin position="312"/>
        <end position="332"/>
    </location>
</feature>
<feature type="transmembrane region" description="Helical" evidence="1">
    <location>
        <begin position="336"/>
        <end position="356"/>
    </location>
</feature>
<feature type="region of interest" description="Disordered" evidence="2">
    <location>
        <begin position="12"/>
        <end position="34"/>
    </location>
</feature>
<feature type="region of interest" description="Disordered" evidence="2">
    <location>
        <begin position="367"/>
        <end position="390"/>
    </location>
</feature>
<dbReference type="EMBL" id="AL021713">
    <property type="protein sequence ID" value="CAA16794.1"/>
    <property type="status" value="ALT_SEQ"/>
    <property type="molecule type" value="Genomic_DNA"/>
</dbReference>
<dbReference type="EMBL" id="AL161548">
    <property type="protein sequence ID" value="CAB78824.1"/>
    <property type="status" value="ALT_SEQ"/>
    <property type="molecule type" value="Genomic_DNA"/>
</dbReference>
<dbReference type="EMBL" id="CP002687">
    <property type="protein sequence ID" value="AEE84013.2"/>
    <property type="molecule type" value="Genomic_DNA"/>
</dbReference>
<dbReference type="PIR" id="T04924">
    <property type="entry name" value="T04924"/>
</dbReference>
<dbReference type="RefSeq" id="NP_001319981.1">
    <property type="nucleotide sequence ID" value="NM_001341267.1"/>
</dbReference>
<dbReference type="SMR" id="O49726"/>
<dbReference type="BioGRID" id="12841">
    <property type="interactions" value="21"/>
</dbReference>
<dbReference type="IntAct" id="O49726">
    <property type="interactions" value="1"/>
</dbReference>
<dbReference type="STRING" id="3702.O49726"/>
<dbReference type="PaxDb" id="3702-AT4G18220.1"/>
<dbReference type="ProteomicsDB" id="226116"/>
<dbReference type="EnsemblPlants" id="AT4G18220.1">
    <property type="protein sequence ID" value="AT4G18220.1"/>
    <property type="gene ID" value="AT4G18220"/>
</dbReference>
<dbReference type="GeneID" id="827548"/>
<dbReference type="Gramene" id="AT4G18220.1">
    <property type="protein sequence ID" value="AT4G18220.1"/>
    <property type="gene ID" value="AT4G18220"/>
</dbReference>
<dbReference type="KEGG" id="ath:AT4G18220"/>
<dbReference type="Araport" id="AT4G18220"/>
<dbReference type="TAIR" id="AT4G18220"/>
<dbReference type="eggNOG" id="ENOG502QVMQ">
    <property type="taxonomic scope" value="Eukaryota"/>
</dbReference>
<dbReference type="InParanoid" id="O49726"/>
<dbReference type="OMA" id="WIQMIIY"/>
<dbReference type="PRO" id="PR:O49726"/>
<dbReference type="Proteomes" id="UP000006548">
    <property type="component" value="Chromosome 4"/>
</dbReference>
<dbReference type="ExpressionAtlas" id="O49726">
    <property type="expression patterns" value="baseline and differential"/>
</dbReference>
<dbReference type="GO" id="GO:0016020">
    <property type="term" value="C:membrane"/>
    <property type="evidence" value="ECO:0007669"/>
    <property type="project" value="UniProtKB-SubCell"/>
</dbReference>
<dbReference type="GO" id="GO:0005345">
    <property type="term" value="F:purine nucleobase transmembrane transporter activity"/>
    <property type="evidence" value="ECO:0007669"/>
    <property type="project" value="UniProtKB-ARBA"/>
</dbReference>
<dbReference type="GO" id="GO:0015211">
    <property type="term" value="F:purine nucleoside transmembrane transporter activity"/>
    <property type="evidence" value="ECO:0007669"/>
    <property type="project" value="InterPro"/>
</dbReference>
<dbReference type="InterPro" id="IPR030182">
    <property type="entry name" value="PUP_plant"/>
</dbReference>
<dbReference type="PANTHER" id="PTHR31376">
    <property type="entry name" value="OS09G0467300 PROTEIN-RELATED"/>
    <property type="match status" value="1"/>
</dbReference>
<dbReference type="PANTHER" id="PTHR31376:SF17">
    <property type="entry name" value="PURINE PERMEASE 21-RELATED"/>
    <property type="match status" value="1"/>
</dbReference>
<dbReference type="Pfam" id="PF16913">
    <property type="entry name" value="PUNUT"/>
    <property type="match status" value="1"/>
</dbReference>
<dbReference type="SUPFAM" id="SSF103481">
    <property type="entry name" value="Multidrug resistance efflux transporter EmrE"/>
    <property type="match status" value="1"/>
</dbReference>
<keyword id="KW-0472">Membrane</keyword>
<keyword id="KW-1185">Reference proteome</keyword>
<keyword id="KW-0812">Transmembrane</keyword>
<keyword id="KW-1133">Transmembrane helix</keyword>
<keyword id="KW-0813">Transport</keyword>
<proteinExistence type="evidence at transcript level"/>
<name>PUP21_ARATH</name>
<reference key="1">
    <citation type="journal article" date="1999" name="Nature">
        <title>Sequence and analysis of chromosome 4 of the plant Arabidopsis thaliana.</title>
        <authorList>
            <person name="Mayer K.F.X."/>
            <person name="Schueller C."/>
            <person name="Wambutt R."/>
            <person name="Murphy G."/>
            <person name="Volckaert G."/>
            <person name="Pohl T."/>
            <person name="Duesterhoeft A."/>
            <person name="Stiekema W."/>
            <person name="Entian K.-D."/>
            <person name="Terryn N."/>
            <person name="Harris B."/>
            <person name="Ansorge W."/>
            <person name="Brandt P."/>
            <person name="Grivell L.A."/>
            <person name="Rieger M."/>
            <person name="Weichselgartner M."/>
            <person name="de Simone V."/>
            <person name="Obermaier B."/>
            <person name="Mache R."/>
            <person name="Mueller M."/>
            <person name="Kreis M."/>
            <person name="Delseny M."/>
            <person name="Puigdomenech P."/>
            <person name="Watson M."/>
            <person name="Schmidtheini T."/>
            <person name="Reichert B."/>
            <person name="Portetelle D."/>
            <person name="Perez-Alonso M."/>
            <person name="Boutry M."/>
            <person name="Bancroft I."/>
            <person name="Vos P."/>
            <person name="Hoheisel J."/>
            <person name="Zimmermann W."/>
            <person name="Wedler H."/>
            <person name="Ridley P."/>
            <person name="Langham S.-A."/>
            <person name="McCullagh B."/>
            <person name="Bilham L."/>
            <person name="Robben J."/>
            <person name="van der Schueren J."/>
            <person name="Grymonprez B."/>
            <person name="Chuang Y.-J."/>
            <person name="Vandenbussche F."/>
            <person name="Braeken M."/>
            <person name="Weltjens I."/>
            <person name="Voet M."/>
            <person name="Bastiaens I."/>
            <person name="Aert R."/>
            <person name="Defoor E."/>
            <person name="Weitzenegger T."/>
            <person name="Bothe G."/>
            <person name="Ramsperger U."/>
            <person name="Hilbert H."/>
            <person name="Braun M."/>
            <person name="Holzer E."/>
            <person name="Brandt A."/>
            <person name="Peters S."/>
            <person name="van Staveren M."/>
            <person name="Dirkse W."/>
            <person name="Mooijman P."/>
            <person name="Klein Lankhorst R."/>
            <person name="Rose M."/>
            <person name="Hauf J."/>
            <person name="Koetter P."/>
            <person name="Berneiser S."/>
            <person name="Hempel S."/>
            <person name="Feldpausch M."/>
            <person name="Lamberth S."/>
            <person name="Van den Daele H."/>
            <person name="De Keyser A."/>
            <person name="Buysshaert C."/>
            <person name="Gielen J."/>
            <person name="Villarroel R."/>
            <person name="De Clercq R."/>
            <person name="van Montagu M."/>
            <person name="Rogers J."/>
            <person name="Cronin A."/>
            <person name="Quail M.A."/>
            <person name="Bray-Allen S."/>
            <person name="Clark L."/>
            <person name="Doggett J."/>
            <person name="Hall S."/>
            <person name="Kay M."/>
            <person name="Lennard N."/>
            <person name="McLay K."/>
            <person name="Mayes R."/>
            <person name="Pettett A."/>
            <person name="Rajandream M.A."/>
            <person name="Lyne M."/>
            <person name="Benes V."/>
            <person name="Rechmann S."/>
            <person name="Borkova D."/>
            <person name="Bloecker H."/>
            <person name="Scharfe M."/>
            <person name="Grimm M."/>
            <person name="Loehnert T.-H."/>
            <person name="Dose S."/>
            <person name="de Haan M."/>
            <person name="Maarse A.C."/>
            <person name="Schaefer M."/>
            <person name="Mueller-Auer S."/>
            <person name="Gabel C."/>
            <person name="Fuchs M."/>
            <person name="Fartmann B."/>
            <person name="Granderath K."/>
            <person name="Dauner D."/>
            <person name="Herzl A."/>
            <person name="Neumann S."/>
            <person name="Argiriou A."/>
            <person name="Vitale D."/>
            <person name="Liguori R."/>
            <person name="Piravandi E."/>
            <person name="Massenet O."/>
            <person name="Quigley F."/>
            <person name="Clabauld G."/>
            <person name="Muendlein A."/>
            <person name="Felber R."/>
            <person name="Schnabl S."/>
            <person name="Hiller R."/>
            <person name="Schmidt W."/>
            <person name="Lecharny A."/>
            <person name="Aubourg S."/>
            <person name="Chefdor F."/>
            <person name="Cooke R."/>
            <person name="Berger C."/>
            <person name="Monfort A."/>
            <person name="Casacuberta E."/>
            <person name="Gibbons T."/>
            <person name="Weber N."/>
            <person name="Vandenbol M."/>
            <person name="Bargues M."/>
            <person name="Terol J."/>
            <person name="Torres A."/>
            <person name="Perez-Perez A."/>
            <person name="Purnelle B."/>
            <person name="Bent E."/>
            <person name="Johnson S."/>
            <person name="Tacon D."/>
            <person name="Jesse T."/>
            <person name="Heijnen L."/>
            <person name="Schwarz S."/>
            <person name="Scholler P."/>
            <person name="Heber S."/>
            <person name="Francs P."/>
            <person name="Bielke C."/>
            <person name="Frishman D."/>
            <person name="Haase D."/>
            <person name="Lemcke K."/>
            <person name="Mewes H.-W."/>
            <person name="Stocker S."/>
            <person name="Zaccaria P."/>
            <person name="Bevan M."/>
            <person name="Wilson R.K."/>
            <person name="de la Bastide M."/>
            <person name="Habermann K."/>
            <person name="Parnell L."/>
            <person name="Dedhia N."/>
            <person name="Gnoj L."/>
            <person name="Schutz K."/>
            <person name="Huang E."/>
            <person name="Spiegel L."/>
            <person name="Sekhon M."/>
            <person name="Murray J."/>
            <person name="Sheet P."/>
            <person name="Cordes M."/>
            <person name="Abu-Threideh J."/>
            <person name="Stoneking T."/>
            <person name="Kalicki J."/>
            <person name="Graves T."/>
            <person name="Harmon G."/>
            <person name="Edwards J."/>
            <person name="Latreille P."/>
            <person name="Courtney L."/>
            <person name="Cloud J."/>
            <person name="Abbott A."/>
            <person name="Scott K."/>
            <person name="Johnson D."/>
            <person name="Minx P."/>
            <person name="Bentley D."/>
            <person name="Fulton B."/>
            <person name="Miller N."/>
            <person name="Greco T."/>
            <person name="Kemp K."/>
            <person name="Kramer J."/>
            <person name="Fulton L."/>
            <person name="Mardis E."/>
            <person name="Dante M."/>
            <person name="Pepin K."/>
            <person name="Hillier L.W."/>
            <person name="Nelson J."/>
            <person name="Spieth J."/>
            <person name="Ryan E."/>
            <person name="Andrews S."/>
            <person name="Geisel C."/>
            <person name="Layman D."/>
            <person name="Du H."/>
            <person name="Ali J."/>
            <person name="Berghoff A."/>
            <person name="Jones K."/>
            <person name="Drone K."/>
            <person name="Cotton M."/>
            <person name="Joshu C."/>
            <person name="Antonoiu B."/>
            <person name="Zidanic M."/>
            <person name="Strong C."/>
            <person name="Sun H."/>
            <person name="Lamar B."/>
            <person name="Yordan C."/>
            <person name="Ma P."/>
            <person name="Zhong J."/>
            <person name="Preston R."/>
            <person name="Vil D."/>
            <person name="Shekher M."/>
            <person name="Matero A."/>
            <person name="Shah R."/>
            <person name="Swaby I.K."/>
            <person name="O'Shaughnessy A."/>
            <person name="Rodriguez M."/>
            <person name="Hoffman J."/>
            <person name="Till S."/>
            <person name="Granat S."/>
            <person name="Shohdy N."/>
            <person name="Hasegawa A."/>
            <person name="Hameed A."/>
            <person name="Lodhi M."/>
            <person name="Johnson A."/>
            <person name="Chen E."/>
            <person name="Marra M.A."/>
            <person name="Martienssen R."/>
            <person name="McCombie W.R."/>
        </authorList>
    </citation>
    <scope>NUCLEOTIDE SEQUENCE [LARGE SCALE GENOMIC DNA]</scope>
    <source>
        <strain>cv. Columbia</strain>
    </source>
</reference>
<reference key="2">
    <citation type="journal article" date="2017" name="Plant J.">
        <title>Araport11: a complete reannotation of the Arabidopsis thaliana reference genome.</title>
        <authorList>
            <person name="Cheng C.Y."/>
            <person name="Krishnakumar V."/>
            <person name="Chan A.P."/>
            <person name="Thibaud-Nissen F."/>
            <person name="Schobel S."/>
            <person name="Town C.D."/>
        </authorList>
    </citation>
    <scope>GENOME REANNOTATION</scope>
    <source>
        <strain>cv. Columbia</strain>
    </source>
</reference>
<reference key="3">
    <citation type="journal article" date="2016" name="Science">
        <title>Plant development regulated by cytokinin sinks.</title>
        <authorList>
            <person name="Zuercher E."/>
            <person name="Liu J."/>
            <person name="di Donato M."/>
            <person name="Geisler M."/>
            <person name="Mueller B."/>
        </authorList>
    </citation>
    <scope>TISSUE SPECIFICITY</scope>
    <scope>NOMENCLATURE</scope>
    <scope>GENE FAMILY</scope>
</reference>
<evidence type="ECO:0000255" key="1"/>
<evidence type="ECO:0000256" key="2">
    <source>
        <dbReference type="SAM" id="MobiDB-lite"/>
    </source>
</evidence>
<evidence type="ECO:0000269" key="3">
    <source>
    </source>
</evidence>
<evidence type="ECO:0000303" key="4">
    <source>
    </source>
</evidence>
<evidence type="ECO:0000305" key="5"/>
<evidence type="ECO:0000312" key="6">
    <source>
        <dbReference type="Araport" id="AT4G18220"/>
    </source>
</evidence>
<evidence type="ECO:0000312" key="7">
    <source>
        <dbReference type="EMBL" id="CAA16794.1"/>
    </source>
</evidence>